<keyword id="KW-0067">ATP-binding</keyword>
<keyword id="KW-0238">DNA-binding</keyword>
<keyword id="KW-0479">Metal-binding</keyword>
<keyword id="KW-0547">Nucleotide-binding</keyword>
<keyword id="KW-0678">Repressor</keyword>
<keyword id="KW-0804">Transcription</keyword>
<keyword id="KW-0805">Transcription regulation</keyword>
<keyword id="KW-0862">Zinc</keyword>
<keyword id="KW-0863">Zinc-finger</keyword>
<evidence type="ECO:0000255" key="1">
    <source>
        <dbReference type="HAMAP-Rule" id="MF_00440"/>
    </source>
</evidence>
<comment type="function">
    <text evidence="1">Negatively regulates transcription of bacterial ribonucleotide reductase nrd genes and operons by binding to NrdR-boxes.</text>
</comment>
<comment type="cofactor">
    <cofactor evidence="1">
        <name>Zn(2+)</name>
        <dbReference type="ChEBI" id="CHEBI:29105"/>
    </cofactor>
    <text evidence="1">Binds 1 zinc ion.</text>
</comment>
<comment type="similarity">
    <text evidence="1">Belongs to the NrdR family.</text>
</comment>
<gene>
    <name evidence="1" type="primary">nrdR</name>
    <name type="ordered locus">Shewmr7_1161</name>
</gene>
<protein>
    <recommendedName>
        <fullName evidence="1">Transcriptional repressor NrdR</fullName>
    </recommendedName>
</protein>
<reference key="1">
    <citation type="submission" date="2006-08" db="EMBL/GenBank/DDBJ databases">
        <title>Complete sequence of chromosome 1 of Shewanella sp. MR-7.</title>
        <authorList>
            <person name="Copeland A."/>
            <person name="Lucas S."/>
            <person name="Lapidus A."/>
            <person name="Barry K."/>
            <person name="Detter J.C."/>
            <person name="Glavina del Rio T."/>
            <person name="Hammon N."/>
            <person name="Israni S."/>
            <person name="Dalin E."/>
            <person name="Tice H."/>
            <person name="Pitluck S."/>
            <person name="Kiss H."/>
            <person name="Brettin T."/>
            <person name="Bruce D."/>
            <person name="Han C."/>
            <person name="Tapia R."/>
            <person name="Gilna P."/>
            <person name="Schmutz J."/>
            <person name="Larimer F."/>
            <person name="Land M."/>
            <person name="Hauser L."/>
            <person name="Kyrpides N."/>
            <person name="Mikhailova N."/>
            <person name="Nealson K."/>
            <person name="Konstantinidis K."/>
            <person name="Klappenbach J."/>
            <person name="Tiedje J."/>
            <person name="Richardson P."/>
        </authorList>
    </citation>
    <scope>NUCLEOTIDE SEQUENCE [LARGE SCALE GENOMIC DNA]</scope>
    <source>
        <strain>MR-7</strain>
    </source>
</reference>
<accession>Q0HXJ5</accession>
<name>NRDR_SHESR</name>
<dbReference type="EMBL" id="CP000444">
    <property type="protein sequence ID" value="ABI42160.1"/>
    <property type="molecule type" value="Genomic_DNA"/>
</dbReference>
<dbReference type="SMR" id="Q0HXJ5"/>
<dbReference type="KEGG" id="shm:Shewmr7_1161"/>
<dbReference type="HOGENOM" id="CLU_108412_0_0_6"/>
<dbReference type="GO" id="GO:0005524">
    <property type="term" value="F:ATP binding"/>
    <property type="evidence" value="ECO:0007669"/>
    <property type="project" value="UniProtKB-KW"/>
</dbReference>
<dbReference type="GO" id="GO:0003677">
    <property type="term" value="F:DNA binding"/>
    <property type="evidence" value="ECO:0007669"/>
    <property type="project" value="UniProtKB-KW"/>
</dbReference>
<dbReference type="GO" id="GO:0008270">
    <property type="term" value="F:zinc ion binding"/>
    <property type="evidence" value="ECO:0007669"/>
    <property type="project" value="UniProtKB-UniRule"/>
</dbReference>
<dbReference type="GO" id="GO:0045892">
    <property type="term" value="P:negative regulation of DNA-templated transcription"/>
    <property type="evidence" value="ECO:0007669"/>
    <property type="project" value="UniProtKB-UniRule"/>
</dbReference>
<dbReference type="HAMAP" id="MF_00440">
    <property type="entry name" value="NrdR"/>
    <property type="match status" value="1"/>
</dbReference>
<dbReference type="InterPro" id="IPR005144">
    <property type="entry name" value="ATP-cone_dom"/>
</dbReference>
<dbReference type="InterPro" id="IPR055173">
    <property type="entry name" value="NrdR-like_N"/>
</dbReference>
<dbReference type="InterPro" id="IPR003796">
    <property type="entry name" value="RNR_NrdR-like"/>
</dbReference>
<dbReference type="NCBIfam" id="TIGR00244">
    <property type="entry name" value="transcriptional regulator NrdR"/>
    <property type="match status" value="1"/>
</dbReference>
<dbReference type="PANTHER" id="PTHR30455">
    <property type="entry name" value="TRANSCRIPTIONAL REPRESSOR NRDR"/>
    <property type="match status" value="1"/>
</dbReference>
<dbReference type="PANTHER" id="PTHR30455:SF2">
    <property type="entry name" value="TRANSCRIPTIONAL REPRESSOR NRDR"/>
    <property type="match status" value="1"/>
</dbReference>
<dbReference type="Pfam" id="PF03477">
    <property type="entry name" value="ATP-cone"/>
    <property type="match status" value="1"/>
</dbReference>
<dbReference type="Pfam" id="PF22811">
    <property type="entry name" value="Zn_ribbon_NrdR"/>
    <property type="match status" value="1"/>
</dbReference>
<dbReference type="PROSITE" id="PS51161">
    <property type="entry name" value="ATP_CONE"/>
    <property type="match status" value="1"/>
</dbReference>
<proteinExistence type="inferred from homology"/>
<organism>
    <name type="scientific">Shewanella sp. (strain MR-7)</name>
    <dbReference type="NCBI Taxonomy" id="60481"/>
    <lineage>
        <taxon>Bacteria</taxon>
        <taxon>Pseudomonadati</taxon>
        <taxon>Pseudomonadota</taxon>
        <taxon>Gammaproteobacteria</taxon>
        <taxon>Alteromonadales</taxon>
        <taxon>Shewanellaceae</taxon>
        <taxon>Shewanella</taxon>
    </lineage>
</organism>
<sequence length="149" mass="17102">MHCPFCSATDTKVIDSRLVAEGHQVRRRRECTECHERFTTFEGAELVMPRVIKRDGTRQPFDEEKLQAGMLRAVEKRPVSMDEIEQALSKIKSTLRATGEREVPSEMIGNLMMEQLMSLDKVAYIRFASVYRAFEDVSEFGEAIAKLQK</sequence>
<feature type="chain" id="PRO_0000264211" description="Transcriptional repressor NrdR">
    <location>
        <begin position="1"/>
        <end position="149"/>
    </location>
</feature>
<feature type="domain" description="ATP-cone" evidence="1">
    <location>
        <begin position="49"/>
        <end position="139"/>
    </location>
</feature>
<feature type="zinc finger region" evidence="1">
    <location>
        <begin position="3"/>
        <end position="34"/>
    </location>
</feature>